<sequence>MSRPIRAFINCAALRHNLAVVRRHVHQARIMAVVKADAYGHGLLRVARALDAVDGFAVLELEAAIQLREAGFSQLILLLEGFFSIEEIEAINHYRLSTVIHCHEQLSMLLAHKKTGKPDIFLKINTGMNRLGFRPEEGNSVLNRLRQWHTDISITLMTHFACADDLLEADHVDQQLGSFARLEEKREGCIPRTLANSAAILRYPGTHADWVRPGIILYGASPLPDKTGIELGLQPVMTLTSRIIAVQHLDFSDRLGYGGQFVADQPMRVGVVAAGYADGYPRHAPTGTPVLVNGRRTRLIGRVSMDMLTVDLSGINEAGAGSLVTLWGEGLPVEEVARSAQTISYELLAALSPRVQTVSSIP</sequence>
<feature type="chain" id="PRO_1000066018" description="Alanine racemase">
    <location>
        <begin position="1"/>
        <end position="362"/>
    </location>
</feature>
<feature type="active site" description="Proton acceptor; specific for D-alanine" evidence="1">
    <location>
        <position position="35"/>
    </location>
</feature>
<feature type="active site" description="Proton acceptor; specific for L-alanine" evidence="1">
    <location>
        <position position="257"/>
    </location>
</feature>
<feature type="binding site" evidence="1">
    <location>
        <position position="130"/>
    </location>
    <ligand>
        <name>substrate</name>
    </ligand>
</feature>
<feature type="binding site" evidence="1">
    <location>
        <position position="305"/>
    </location>
    <ligand>
        <name>substrate</name>
    </ligand>
</feature>
<feature type="modified residue" description="N6-(pyridoxal phosphate)lysine" evidence="1">
    <location>
        <position position="35"/>
    </location>
</feature>
<dbReference type="EC" id="5.1.1.1" evidence="1"/>
<dbReference type="EMBL" id="AL954747">
    <property type="protein sequence ID" value="CAD85328.1"/>
    <property type="molecule type" value="Genomic_DNA"/>
</dbReference>
<dbReference type="RefSeq" id="WP_011111985.1">
    <property type="nucleotide sequence ID" value="NC_004757.1"/>
</dbReference>
<dbReference type="SMR" id="Q82UR4"/>
<dbReference type="STRING" id="228410.NE1417"/>
<dbReference type="GeneID" id="87104591"/>
<dbReference type="KEGG" id="neu:NE1417"/>
<dbReference type="eggNOG" id="COG0787">
    <property type="taxonomic scope" value="Bacteria"/>
</dbReference>
<dbReference type="HOGENOM" id="CLU_028393_1_0_4"/>
<dbReference type="OrthoDB" id="9813814at2"/>
<dbReference type="PhylomeDB" id="Q82UR4"/>
<dbReference type="UniPathway" id="UPA00042">
    <property type="reaction ID" value="UER00497"/>
</dbReference>
<dbReference type="Proteomes" id="UP000001416">
    <property type="component" value="Chromosome"/>
</dbReference>
<dbReference type="GO" id="GO:0005829">
    <property type="term" value="C:cytosol"/>
    <property type="evidence" value="ECO:0007669"/>
    <property type="project" value="TreeGrafter"/>
</dbReference>
<dbReference type="GO" id="GO:0008784">
    <property type="term" value="F:alanine racemase activity"/>
    <property type="evidence" value="ECO:0007669"/>
    <property type="project" value="UniProtKB-UniRule"/>
</dbReference>
<dbReference type="GO" id="GO:0030170">
    <property type="term" value="F:pyridoxal phosphate binding"/>
    <property type="evidence" value="ECO:0007669"/>
    <property type="project" value="UniProtKB-UniRule"/>
</dbReference>
<dbReference type="GO" id="GO:0030632">
    <property type="term" value="P:D-alanine biosynthetic process"/>
    <property type="evidence" value="ECO:0007669"/>
    <property type="project" value="UniProtKB-UniRule"/>
</dbReference>
<dbReference type="CDD" id="cd06827">
    <property type="entry name" value="PLPDE_III_AR_proteobact"/>
    <property type="match status" value="1"/>
</dbReference>
<dbReference type="FunFam" id="2.40.37.10:FF:000002">
    <property type="entry name" value="Alanine racemase"/>
    <property type="match status" value="1"/>
</dbReference>
<dbReference type="FunFam" id="3.20.20.10:FF:000002">
    <property type="entry name" value="Alanine racemase"/>
    <property type="match status" value="1"/>
</dbReference>
<dbReference type="Gene3D" id="3.20.20.10">
    <property type="entry name" value="Alanine racemase"/>
    <property type="match status" value="1"/>
</dbReference>
<dbReference type="Gene3D" id="2.40.37.10">
    <property type="entry name" value="Lyase, Ornithine Decarboxylase, Chain A, domain 1"/>
    <property type="match status" value="1"/>
</dbReference>
<dbReference type="HAMAP" id="MF_01201">
    <property type="entry name" value="Ala_racemase"/>
    <property type="match status" value="1"/>
</dbReference>
<dbReference type="InterPro" id="IPR000821">
    <property type="entry name" value="Ala_racemase"/>
</dbReference>
<dbReference type="InterPro" id="IPR009006">
    <property type="entry name" value="Ala_racemase/Decarboxylase_C"/>
</dbReference>
<dbReference type="InterPro" id="IPR011079">
    <property type="entry name" value="Ala_racemase_C"/>
</dbReference>
<dbReference type="InterPro" id="IPR001608">
    <property type="entry name" value="Ala_racemase_N"/>
</dbReference>
<dbReference type="InterPro" id="IPR020622">
    <property type="entry name" value="Ala_racemase_pyridoxalP-BS"/>
</dbReference>
<dbReference type="InterPro" id="IPR029066">
    <property type="entry name" value="PLP-binding_barrel"/>
</dbReference>
<dbReference type="NCBIfam" id="TIGR00492">
    <property type="entry name" value="alr"/>
    <property type="match status" value="1"/>
</dbReference>
<dbReference type="PANTHER" id="PTHR30511">
    <property type="entry name" value="ALANINE RACEMASE"/>
    <property type="match status" value="1"/>
</dbReference>
<dbReference type="PANTHER" id="PTHR30511:SF0">
    <property type="entry name" value="ALANINE RACEMASE, CATABOLIC-RELATED"/>
    <property type="match status" value="1"/>
</dbReference>
<dbReference type="Pfam" id="PF00842">
    <property type="entry name" value="Ala_racemase_C"/>
    <property type="match status" value="1"/>
</dbReference>
<dbReference type="Pfam" id="PF01168">
    <property type="entry name" value="Ala_racemase_N"/>
    <property type="match status" value="1"/>
</dbReference>
<dbReference type="PRINTS" id="PR00992">
    <property type="entry name" value="ALARACEMASE"/>
</dbReference>
<dbReference type="SMART" id="SM01005">
    <property type="entry name" value="Ala_racemase_C"/>
    <property type="match status" value="1"/>
</dbReference>
<dbReference type="SUPFAM" id="SSF50621">
    <property type="entry name" value="Alanine racemase C-terminal domain-like"/>
    <property type="match status" value="1"/>
</dbReference>
<dbReference type="SUPFAM" id="SSF51419">
    <property type="entry name" value="PLP-binding barrel"/>
    <property type="match status" value="1"/>
</dbReference>
<dbReference type="PROSITE" id="PS00395">
    <property type="entry name" value="ALANINE_RACEMASE"/>
    <property type="match status" value="1"/>
</dbReference>
<comment type="function">
    <text evidence="1">Catalyzes the interconversion of L-alanine and D-alanine. May also act on other amino acids.</text>
</comment>
<comment type="catalytic activity">
    <reaction evidence="1">
        <text>L-alanine = D-alanine</text>
        <dbReference type="Rhea" id="RHEA:20249"/>
        <dbReference type="ChEBI" id="CHEBI:57416"/>
        <dbReference type="ChEBI" id="CHEBI:57972"/>
        <dbReference type="EC" id="5.1.1.1"/>
    </reaction>
</comment>
<comment type="cofactor">
    <cofactor evidence="1">
        <name>pyridoxal 5'-phosphate</name>
        <dbReference type="ChEBI" id="CHEBI:597326"/>
    </cofactor>
</comment>
<comment type="pathway">
    <text evidence="1">Amino-acid biosynthesis; D-alanine biosynthesis; D-alanine from L-alanine: step 1/1.</text>
</comment>
<comment type="similarity">
    <text evidence="1">Belongs to the alanine racemase family.</text>
</comment>
<name>ALR_NITEU</name>
<protein>
    <recommendedName>
        <fullName evidence="1">Alanine racemase</fullName>
        <ecNumber evidence="1">5.1.1.1</ecNumber>
    </recommendedName>
</protein>
<reference key="1">
    <citation type="journal article" date="2003" name="J. Bacteriol.">
        <title>Complete genome sequence of the ammonia-oxidizing bacterium and obligate chemolithoautotroph Nitrosomonas europaea.</title>
        <authorList>
            <person name="Chain P."/>
            <person name="Lamerdin J.E."/>
            <person name="Larimer F.W."/>
            <person name="Regala W."/>
            <person name="Lao V."/>
            <person name="Land M.L."/>
            <person name="Hauser L."/>
            <person name="Hooper A.B."/>
            <person name="Klotz M.G."/>
            <person name="Norton J."/>
            <person name="Sayavedra-Soto L.A."/>
            <person name="Arciero D.M."/>
            <person name="Hommes N.G."/>
            <person name="Whittaker M.M."/>
            <person name="Arp D.J."/>
        </authorList>
    </citation>
    <scope>NUCLEOTIDE SEQUENCE [LARGE SCALE GENOMIC DNA]</scope>
    <source>
        <strain>ATCC 19718 / CIP 103999 / KCTC 2705 / NBRC 14298</strain>
    </source>
</reference>
<proteinExistence type="inferred from homology"/>
<keyword id="KW-0413">Isomerase</keyword>
<keyword id="KW-0663">Pyridoxal phosphate</keyword>
<keyword id="KW-1185">Reference proteome</keyword>
<accession>Q82UR4</accession>
<organism>
    <name type="scientific">Nitrosomonas europaea (strain ATCC 19718 / CIP 103999 / KCTC 2705 / NBRC 14298)</name>
    <dbReference type="NCBI Taxonomy" id="228410"/>
    <lineage>
        <taxon>Bacteria</taxon>
        <taxon>Pseudomonadati</taxon>
        <taxon>Pseudomonadota</taxon>
        <taxon>Betaproteobacteria</taxon>
        <taxon>Nitrosomonadales</taxon>
        <taxon>Nitrosomonadaceae</taxon>
        <taxon>Nitrosomonas</taxon>
    </lineage>
</organism>
<evidence type="ECO:0000255" key="1">
    <source>
        <dbReference type="HAMAP-Rule" id="MF_01201"/>
    </source>
</evidence>
<gene>
    <name type="primary">alr</name>
    <name type="ordered locus">NE1417</name>
</gene>